<proteinExistence type="inferred from homology"/>
<feature type="chain" id="PRO_1000199656" description="Protoheme IX farnesyltransferase">
    <location>
        <begin position="1"/>
        <end position="308"/>
    </location>
</feature>
<feature type="transmembrane region" description="Helical" evidence="1">
    <location>
        <begin position="20"/>
        <end position="40"/>
    </location>
</feature>
<feature type="transmembrane region" description="Helical" evidence="1">
    <location>
        <begin position="50"/>
        <end position="70"/>
    </location>
</feature>
<feature type="transmembrane region" description="Helical" evidence="1">
    <location>
        <begin position="102"/>
        <end position="122"/>
    </location>
</feature>
<feature type="transmembrane region" description="Helical" evidence="1">
    <location>
        <begin position="124"/>
        <end position="144"/>
    </location>
</feature>
<feature type="transmembrane region" description="Helical" evidence="1">
    <location>
        <begin position="149"/>
        <end position="169"/>
    </location>
</feature>
<feature type="transmembrane region" description="Helical" evidence="1">
    <location>
        <begin position="170"/>
        <end position="190"/>
    </location>
</feature>
<feature type="transmembrane region" description="Helical" evidence="1">
    <location>
        <begin position="227"/>
        <end position="249"/>
    </location>
</feature>
<feature type="transmembrane region" description="Helical" evidence="1">
    <location>
        <begin position="288"/>
        <end position="308"/>
    </location>
</feature>
<keyword id="KW-1003">Cell membrane</keyword>
<keyword id="KW-0350">Heme biosynthesis</keyword>
<keyword id="KW-0472">Membrane</keyword>
<keyword id="KW-0808">Transferase</keyword>
<keyword id="KW-0812">Transmembrane</keyword>
<keyword id="KW-1133">Transmembrane helix</keyword>
<name>COXX_MYCBT</name>
<gene>
    <name evidence="1" type="primary">ctaB</name>
    <name type="ordered locus">JTY_1487</name>
</gene>
<accession>C1AN96</accession>
<reference key="1">
    <citation type="journal article" date="2009" name="Vaccine">
        <title>Whole genome sequence analysis of Mycobacterium bovis bacillus Calmette-Guerin (BCG) Tokyo 172: a comparative study of BCG vaccine substrains.</title>
        <authorList>
            <person name="Seki M."/>
            <person name="Honda I."/>
            <person name="Fujita I."/>
            <person name="Yano I."/>
            <person name="Yamamoto S."/>
            <person name="Koyama A."/>
        </authorList>
    </citation>
    <scope>NUCLEOTIDE SEQUENCE [LARGE SCALE GENOMIC DNA]</scope>
    <source>
        <strain>BCG / Tokyo 172 / ATCC 35737 / TMC 1019</strain>
    </source>
</reference>
<sequence>MNVRGRVAPRRVTGRAMSTLLAYLALTKPRVIELLLVTAIPAMLLADRGAIHPLLMLNTLVGGMMAATGANTLNCVADADIDKVMKRTARRPLAREAVPTRNALALGLTLTVISFFWLWCATNLLAGVLALVTVAFYVFVYTLWLKRRTSQNVVWGGAAGCMPVMIGWSAITGTIAWPALAMFAIIFFWTPPHTWALAMRYKQDYQVAGVPMLPAVATERQVTKQILIYTWLTVAATLVLALATSWLYGAVALVAGGWFLTMAHQLYAGVRAGEPVRPLRLFLQSNNYLAVVFCALAVDSVIALPTLH</sequence>
<organism>
    <name type="scientific">Mycobacterium bovis (strain BCG / Tokyo 172 / ATCC 35737 / TMC 1019)</name>
    <dbReference type="NCBI Taxonomy" id="561275"/>
    <lineage>
        <taxon>Bacteria</taxon>
        <taxon>Bacillati</taxon>
        <taxon>Actinomycetota</taxon>
        <taxon>Actinomycetes</taxon>
        <taxon>Mycobacteriales</taxon>
        <taxon>Mycobacteriaceae</taxon>
        <taxon>Mycobacterium</taxon>
        <taxon>Mycobacterium tuberculosis complex</taxon>
    </lineage>
</organism>
<protein>
    <recommendedName>
        <fullName evidence="1">Protoheme IX farnesyltransferase</fullName>
        <ecNumber evidence="1">2.5.1.141</ecNumber>
    </recommendedName>
    <alternativeName>
        <fullName evidence="1">Heme B farnesyltransferase</fullName>
    </alternativeName>
    <alternativeName>
        <fullName evidence="1">Heme O synthase</fullName>
    </alternativeName>
</protein>
<comment type="function">
    <text evidence="1">Converts heme B (protoheme IX) to heme O by substitution of the vinyl group on carbon 2 of heme B porphyrin ring with a hydroxyethyl farnesyl side group.</text>
</comment>
<comment type="catalytic activity">
    <reaction evidence="1">
        <text>heme b + (2E,6E)-farnesyl diphosphate + H2O = Fe(II)-heme o + diphosphate</text>
        <dbReference type="Rhea" id="RHEA:28070"/>
        <dbReference type="ChEBI" id="CHEBI:15377"/>
        <dbReference type="ChEBI" id="CHEBI:33019"/>
        <dbReference type="ChEBI" id="CHEBI:60344"/>
        <dbReference type="ChEBI" id="CHEBI:60530"/>
        <dbReference type="ChEBI" id="CHEBI:175763"/>
        <dbReference type="EC" id="2.5.1.141"/>
    </reaction>
</comment>
<comment type="pathway">
    <text evidence="1">Porphyrin-containing compound metabolism; heme O biosynthesis; heme O from protoheme: step 1/1.</text>
</comment>
<comment type="subcellular location">
    <subcellularLocation>
        <location evidence="1">Cell membrane</location>
        <topology evidence="1">Multi-pass membrane protein</topology>
    </subcellularLocation>
</comment>
<comment type="miscellaneous">
    <text evidence="1">Carbon 2 of the heme B porphyrin ring is defined according to the Fischer nomenclature.</text>
</comment>
<comment type="similarity">
    <text evidence="1">Belongs to the UbiA prenyltransferase family. Protoheme IX farnesyltransferase subfamily.</text>
</comment>
<dbReference type="EC" id="2.5.1.141" evidence="1"/>
<dbReference type="EMBL" id="AP010918">
    <property type="protein sequence ID" value="BAH25775.1"/>
    <property type="molecule type" value="Genomic_DNA"/>
</dbReference>
<dbReference type="RefSeq" id="WP_003422137.1">
    <property type="nucleotide sequence ID" value="NZ_CP014566.1"/>
</dbReference>
<dbReference type="SMR" id="C1AN96"/>
<dbReference type="KEGG" id="mbt:JTY_1487"/>
<dbReference type="HOGENOM" id="CLU_029631_0_1_11"/>
<dbReference type="UniPathway" id="UPA00834">
    <property type="reaction ID" value="UER00712"/>
</dbReference>
<dbReference type="GO" id="GO:0005886">
    <property type="term" value="C:plasma membrane"/>
    <property type="evidence" value="ECO:0007669"/>
    <property type="project" value="UniProtKB-SubCell"/>
</dbReference>
<dbReference type="GO" id="GO:0008495">
    <property type="term" value="F:protoheme IX farnesyltransferase activity"/>
    <property type="evidence" value="ECO:0007669"/>
    <property type="project" value="UniProtKB-UniRule"/>
</dbReference>
<dbReference type="GO" id="GO:0048034">
    <property type="term" value="P:heme O biosynthetic process"/>
    <property type="evidence" value="ECO:0007669"/>
    <property type="project" value="UniProtKB-UniRule"/>
</dbReference>
<dbReference type="CDD" id="cd13957">
    <property type="entry name" value="PT_UbiA_Cox10"/>
    <property type="match status" value="1"/>
</dbReference>
<dbReference type="FunFam" id="1.10.357.140:FF:000001">
    <property type="entry name" value="Protoheme IX farnesyltransferase"/>
    <property type="match status" value="1"/>
</dbReference>
<dbReference type="Gene3D" id="1.10.357.140">
    <property type="entry name" value="UbiA prenyltransferase"/>
    <property type="match status" value="1"/>
</dbReference>
<dbReference type="HAMAP" id="MF_00154">
    <property type="entry name" value="CyoE_CtaB"/>
    <property type="match status" value="1"/>
</dbReference>
<dbReference type="InterPro" id="IPR006369">
    <property type="entry name" value="Protohaem_IX_farnesylTrfase"/>
</dbReference>
<dbReference type="InterPro" id="IPR000537">
    <property type="entry name" value="UbiA_prenyltransferase"/>
</dbReference>
<dbReference type="InterPro" id="IPR044878">
    <property type="entry name" value="UbiA_sf"/>
</dbReference>
<dbReference type="NCBIfam" id="TIGR01473">
    <property type="entry name" value="cyoE_ctaB"/>
    <property type="match status" value="1"/>
</dbReference>
<dbReference type="NCBIfam" id="NF003349">
    <property type="entry name" value="PRK04375.1-2"/>
    <property type="match status" value="1"/>
</dbReference>
<dbReference type="PANTHER" id="PTHR43448:SF7">
    <property type="entry name" value="4-HYDROXYBENZOATE SOLANESYLTRANSFERASE"/>
    <property type="match status" value="1"/>
</dbReference>
<dbReference type="PANTHER" id="PTHR43448">
    <property type="entry name" value="PROTOHEME IX FARNESYLTRANSFERASE, MITOCHONDRIAL"/>
    <property type="match status" value="1"/>
</dbReference>
<dbReference type="Pfam" id="PF01040">
    <property type="entry name" value="UbiA"/>
    <property type="match status" value="1"/>
</dbReference>
<evidence type="ECO:0000255" key="1">
    <source>
        <dbReference type="HAMAP-Rule" id="MF_00154"/>
    </source>
</evidence>